<accession>Q10159</accession>
<accession>O74679</accession>
<evidence type="ECO:0000250" key="1"/>
<evidence type="ECO:0000250" key="2">
    <source>
        <dbReference type="UniProtKB" id="P83847"/>
    </source>
</evidence>
<evidence type="ECO:0000269" key="3">
    <source>
    </source>
</evidence>
<evidence type="ECO:0000305" key="4"/>
<keyword id="KW-0004">4Fe-4S</keyword>
<keyword id="KW-0227">DNA damage</keyword>
<keyword id="KW-0234">DNA repair</keyword>
<keyword id="KW-0326">Glycosidase</keyword>
<keyword id="KW-0378">Hydrolase</keyword>
<keyword id="KW-0408">Iron</keyword>
<keyword id="KW-0411">Iron-sulfur</keyword>
<keyword id="KW-0479">Metal-binding</keyword>
<keyword id="KW-1185">Reference proteome</keyword>
<organism>
    <name type="scientific">Schizosaccharomyces pombe (strain 972 / ATCC 24843)</name>
    <name type="common">Fission yeast</name>
    <dbReference type="NCBI Taxonomy" id="284812"/>
    <lineage>
        <taxon>Eukaryota</taxon>
        <taxon>Fungi</taxon>
        <taxon>Dikarya</taxon>
        <taxon>Ascomycota</taxon>
        <taxon>Taphrinomycotina</taxon>
        <taxon>Schizosaccharomycetes</taxon>
        <taxon>Schizosaccharomycetales</taxon>
        <taxon>Schizosaccharomycetaceae</taxon>
        <taxon>Schizosaccharomyces</taxon>
    </lineage>
</organism>
<dbReference type="EC" id="3.2.2.31"/>
<dbReference type="EMBL" id="AF053340">
    <property type="protein sequence ID" value="AAC36207.1"/>
    <property type="molecule type" value="mRNA"/>
</dbReference>
<dbReference type="EMBL" id="CU329670">
    <property type="protein sequence ID" value="CAA93225.1"/>
    <property type="molecule type" value="Genomic_DNA"/>
</dbReference>
<dbReference type="PIR" id="T38390">
    <property type="entry name" value="T38390"/>
</dbReference>
<dbReference type="PIR" id="T43679">
    <property type="entry name" value="T43679"/>
</dbReference>
<dbReference type="RefSeq" id="NP_594145.1">
    <property type="nucleotide sequence ID" value="NM_001019569.2"/>
</dbReference>
<dbReference type="SMR" id="Q10159"/>
<dbReference type="BioGRID" id="279177">
    <property type="interactions" value="18"/>
</dbReference>
<dbReference type="FunCoup" id="Q10159">
    <property type="interactions" value="388"/>
</dbReference>
<dbReference type="IntAct" id="Q10159">
    <property type="interactions" value="4"/>
</dbReference>
<dbReference type="STRING" id="284812.Q10159"/>
<dbReference type="PaxDb" id="4896-SPAC26A3.02.1"/>
<dbReference type="EnsemblFungi" id="SPAC26A3.02.1">
    <property type="protein sequence ID" value="SPAC26A3.02.1:pep"/>
    <property type="gene ID" value="SPAC26A3.02"/>
</dbReference>
<dbReference type="GeneID" id="2542727"/>
<dbReference type="KEGG" id="spo:2542727"/>
<dbReference type="PomBase" id="SPAC26A3.02">
    <property type="gene designation" value="myh1"/>
</dbReference>
<dbReference type="VEuPathDB" id="FungiDB:SPAC26A3.02"/>
<dbReference type="eggNOG" id="KOG2457">
    <property type="taxonomic scope" value="Eukaryota"/>
</dbReference>
<dbReference type="HOGENOM" id="CLU_012862_0_0_1"/>
<dbReference type="InParanoid" id="Q10159"/>
<dbReference type="OMA" id="QQTRMET"/>
<dbReference type="PhylomeDB" id="Q10159"/>
<dbReference type="Reactome" id="R-SPO-110331">
    <property type="pathway name" value="Cleavage of the damaged purine"/>
</dbReference>
<dbReference type="PRO" id="PR:Q10159"/>
<dbReference type="Proteomes" id="UP000002485">
    <property type="component" value="Chromosome I"/>
</dbReference>
<dbReference type="GO" id="GO:0005634">
    <property type="term" value="C:nucleus"/>
    <property type="evidence" value="ECO:0000314"/>
    <property type="project" value="PomBase"/>
</dbReference>
<dbReference type="GO" id="GO:0051539">
    <property type="term" value="F:4 iron, 4 sulfur cluster binding"/>
    <property type="evidence" value="ECO:0000255"/>
    <property type="project" value="PomBase"/>
</dbReference>
<dbReference type="GO" id="GO:0034039">
    <property type="term" value="F:8-oxo-7,8-dihydroguanine DNA N-glycosylase activity"/>
    <property type="evidence" value="ECO:0000314"/>
    <property type="project" value="PomBase"/>
</dbReference>
<dbReference type="GO" id="GO:0035485">
    <property type="term" value="F:adenine/guanine mispair binding"/>
    <property type="evidence" value="ECO:0000314"/>
    <property type="project" value="PomBase"/>
</dbReference>
<dbReference type="GO" id="GO:0046872">
    <property type="term" value="F:metal ion binding"/>
    <property type="evidence" value="ECO:0007669"/>
    <property type="project" value="UniProtKB-KW"/>
</dbReference>
<dbReference type="GO" id="GO:0032357">
    <property type="term" value="F:oxidized purine DNA binding"/>
    <property type="evidence" value="ECO:0000314"/>
    <property type="project" value="PomBase"/>
</dbReference>
<dbReference type="GO" id="GO:0000701">
    <property type="term" value="F:purine-specific mismatch base pair DNA N-glycosylase activity"/>
    <property type="evidence" value="ECO:0000314"/>
    <property type="project" value="PomBase"/>
</dbReference>
<dbReference type="GO" id="GO:0006284">
    <property type="term" value="P:base-excision repair"/>
    <property type="evidence" value="ECO:0000269"/>
    <property type="project" value="PomBase"/>
</dbReference>
<dbReference type="GO" id="GO:0006285">
    <property type="term" value="P:base-excision repair, AP site formation"/>
    <property type="evidence" value="ECO:0000315"/>
    <property type="project" value="PomBase"/>
</dbReference>
<dbReference type="GO" id="GO:0045007">
    <property type="term" value="P:depurination"/>
    <property type="evidence" value="ECO:0000314"/>
    <property type="project" value="PomBase"/>
</dbReference>
<dbReference type="GO" id="GO:0006974">
    <property type="term" value="P:DNA damage response"/>
    <property type="evidence" value="ECO:0000315"/>
    <property type="project" value="PomBase"/>
</dbReference>
<dbReference type="GO" id="GO:0006298">
    <property type="term" value="P:mismatch repair"/>
    <property type="evidence" value="ECO:0000314"/>
    <property type="project" value="PomBase"/>
</dbReference>
<dbReference type="CDD" id="cd00056">
    <property type="entry name" value="ENDO3c"/>
    <property type="match status" value="1"/>
</dbReference>
<dbReference type="CDD" id="cd03431">
    <property type="entry name" value="NUDIX_DNA_Glycosylase_C-MutY"/>
    <property type="match status" value="1"/>
</dbReference>
<dbReference type="FunFam" id="1.10.1670.10:FF:000002">
    <property type="entry name" value="Adenine DNA glycosylase"/>
    <property type="match status" value="1"/>
</dbReference>
<dbReference type="Gene3D" id="1.10.1670.10">
    <property type="entry name" value="Helix-hairpin-Helix base-excision DNA repair enzymes (C-terminal)"/>
    <property type="match status" value="1"/>
</dbReference>
<dbReference type="Gene3D" id="1.10.340.30">
    <property type="entry name" value="Hypothetical protein, domain 2"/>
    <property type="match status" value="1"/>
</dbReference>
<dbReference type="Gene3D" id="3.90.79.10">
    <property type="entry name" value="Nucleoside Triphosphate Pyrophosphohydrolase"/>
    <property type="match status" value="1"/>
</dbReference>
<dbReference type="InterPro" id="IPR011257">
    <property type="entry name" value="DNA_glycosylase"/>
</dbReference>
<dbReference type="InterPro" id="IPR004036">
    <property type="entry name" value="Endonuclease-III-like_CS2"/>
</dbReference>
<dbReference type="InterPro" id="IPR003651">
    <property type="entry name" value="Endonuclease3_FeS-loop_motif"/>
</dbReference>
<dbReference type="InterPro" id="IPR004035">
    <property type="entry name" value="Endouclease-III_FeS-bd_BS"/>
</dbReference>
<dbReference type="InterPro" id="IPR003265">
    <property type="entry name" value="HhH-GPD_domain"/>
</dbReference>
<dbReference type="InterPro" id="IPR023170">
    <property type="entry name" value="HhH_base_excis_C"/>
</dbReference>
<dbReference type="InterPro" id="IPR000445">
    <property type="entry name" value="HhH_motif"/>
</dbReference>
<dbReference type="InterPro" id="IPR044298">
    <property type="entry name" value="MIG/MutY"/>
</dbReference>
<dbReference type="InterPro" id="IPR029119">
    <property type="entry name" value="MutY_C"/>
</dbReference>
<dbReference type="InterPro" id="IPR015797">
    <property type="entry name" value="NUDIX_hydrolase-like_dom_sf"/>
</dbReference>
<dbReference type="PANTHER" id="PTHR42944">
    <property type="entry name" value="ADENINE DNA GLYCOSYLASE"/>
    <property type="match status" value="1"/>
</dbReference>
<dbReference type="PANTHER" id="PTHR42944:SF1">
    <property type="entry name" value="ADENINE DNA GLYCOSYLASE"/>
    <property type="match status" value="1"/>
</dbReference>
<dbReference type="Pfam" id="PF10576">
    <property type="entry name" value="EndIII_4Fe-2S"/>
    <property type="match status" value="1"/>
</dbReference>
<dbReference type="Pfam" id="PF00633">
    <property type="entry name" value="HHH"/>
    <property type="match status" value="1"/>
</dbReference>
<dbReference type="Pfam" id="PF00730">
    <property type="entry name" value="HhH-GPD"/>
    <property type="match status" value="1"/>
</dbReference>
<dbReference type="Pfam" id="PF14815">
    <property type="entry name" value="NUDIX_4"/>
    <property type="match status" value="1"/>
</dbReference>
<dbReference type="SMART" id="SM00478">
    <property type="entry name" value="ENDO3c"/>
    <property type="match status" value="1"/>
</dbReference>
<dbReference type="SMART" id="SM00525">
    <property type="entry name" value="FES"/>
    <property type="match status" value="1"/>
</dbReference>
<dbReference type="SUPFAM" id="SSF48150">
    <property type="entry name" value="DNA-glycosylase"/>
    <property type="match status" value="1"/>
</dbReference>
<dbReference type="SUPFAM" id="SSF55811">
    <property type="entry name" value="Nudix"/>
    <property type="match status" value="1"/>
</dbReference>
<dbReference type="PROSITE" id="PS00764">
    <property type="entry name" value="ENDONUCLEASE_III_1"/>
    <property type="match status" value="1"/>
</dbReference>
<dbReference type="PROSITE" id="PS01155">
    <property type="entry name" value="ENDONUCLEASE_III_2"/>
    <property type="match status" value="1"/>
</dbReference>
<proteinExistence type="evidence at protein level"/>
<feature type="chain" id="PRO_0000102242" description="Adenine DNA glycosylase">
    <location>
        <begin position="1"/>
        <end position="461"/>
    </location>
</feature>
<feature type="domain" description="Nudix hydrolase">
    <location>
        <begin position="296"/>
        <end position="437"/>
    </location>
</feature>
<feature type="short sequence motif" description="Nudix box">
    <location>
        <begin position="340"/>
        <end position="366"/>
    </location>
</feature>
<feature type="active site" description="Proton donor/acceptor" evidence="2">
    <location>
        <position position="69"/>
    </location>
</feature>
<feature type="binding site" evidence="1">
    <location>
        <position position="226"/>
    </location>
    <ligand>
        <name>[4Fe-4S] cluster</name>
        <dbReference type="ChEBI" id="CHEBI:49883"/>
    </ligand>
</feature>
<feature type="binding site" evidence="1">
    <location>
        <position position="233"/>
    </location>
    <ligand>
        <name>[4Fe-4S] cluster</name>
        <dbReference type="ChEBI" id="CHEBI:49883"/>
    </ligand>
</feature>
<feature type="binding site" evidence="1">
    <location>
        <position position="236"/>
    </location>
    <ligand>
        <name>[4Fe-4S] cluster</name>
        <dbReference type="ChEBI" id="CHEBI:49883"/>
    </ligand>
</feature>
<feature type="binding site" evidence="1">
    <location>
        <position position="242"/>
    </location>
    <ligand>
        <name>[4Fe-4S] cluster</name>
        <dbReference type="ChEBI" id="CHEBI:49883"/>
    </ligand>
</feature>
<feature type="site" description="Transition state stabilizer" evidence="2">
    <location>
        <position position="172"/>
    </location>
</feature>
<feature type="sequence conflict" description="In Ref. 1; AAC36207." evidence="4" ref="1">
    <original>S</original>
    <variation>F</variation>
    <location>
        <position position="7"/>
    </location>
</feature>
<protein>
    <recommendedName>
        <fullName>Adenine DNA glycosylase</fullName>
        <ecNumber>3.2.2.31</ecNumber>
    </recommendedName>
</protein>
<gene>
    <name type="primary">myh1</name>
    <name type="synonym">myh</name>
    <name type="ORF">SPAC26A3.02</name>
</gene>
<sequence length="461" mass="52931">MSDSNHSLDLHSYTQLEVERFRESLIQFYDKTKRILPWRKKECIPPSEDSPLEDWEQPVQRLYEVLVSEIMLQQTRVETVKRYYTKWMETLPTLKSCAEAEYNTQVMPLWSGMGFYTRCKRLHQACQHLAKLHPSEIPRTGDEWAKGIPGVGPYTAGAVLSIAWKQPTGIVDGNVIRVLSRALAIHSDCSKGKANALIWKLANELVDPVRPGDFNQALMELGAITCTPQSPRCSVCPISEICKAYQEQNVIRDGNTIKYDIEDVPCNICITDIPSKEDLQNWVVARYPVHPAKTKQREERALVVIFQKTDPSTKEKFFLIRKRPSAGLLAGLWDFPTIEFGQESWPKDMDAEFQKSIAQWISNDSRSLIKKYQSRGRYLHIFSHIRKTSHVFYAIASPDIVTNEDFFWISQSDLEHVGMCELGLKNYRAALEIKKRKVTSLSNFKEPKLTSARRIVTKAEC</sequence>
<name>MYH1_SCHPO</name>
<comment type="function">
    <text evidence="3">Adenine glycosylase active on G-A mispairs. Has glycosylase and nicking activities and is active at A/G and A/GO sites.</text>
</comment>
<comment type="catalytic activity">
    <reaction>
        <text>Hydrolyzes free adenine bases from 7,8-dihydro-8-oxoguanine:adenine mismatched double-stranded DNA, leaving an apurinic site.</text>
        <dbReference type="EC" id="3.2.2.31"/>
    </reaction>
</comment>
<comment type="cofactor">
    <cofactor evidence="1">
        <name>[4Fe-4S] cluster</name>
        <dbReference type="ChEBI" id="CHEBI:49883"/>
    </cofactor>
    <text evidence="1">Binds 1 [4Fe-4S] cluster. The cluster does not appear to play a role in catalysis, but is probably involved in the proper positioning of the enzyme along the DNA strand.</text>
</comment>
<comment type="subunit">
    <text evidence="3">Monomer.</text>
</comment>
<comment type="interaction">
    <interactant intactId="EBI-767574">
        <id>Q10159</id>
    </interactant>
    <interactant intactId="EBI-767597">
        <id>P78955</id>
        <label>hus1</label>
    </interactant>
    <organismsDiffer>false</organismsDiffer>
    <experiments>4</experiments>
</comment>
<comment type="interaction">
    <interactant intactId="EBI-767574">
        <id>Q10159</id>
    </interactant>
    <interactant intactId="EBI-767637">
        <id>P22193</id>
        <label>rad1</label>
    </interactant>
    <organismsDiffer>false</organismsDiffer>
    <experiments>2</experiments>
</comment>
<comment type="similarity">
    <text evidence="4">Belongs to the Nth/MutY family.</text>
</comment>
<reference key="1">
    <citation type="journal article" date="1998" name="J. Biol. Chem.">
        <title>Characterization of the recombinant MutY homolog, an adenine DNA glycosylase, from yeast Schizosaccharomyces pombe.</title>
        <authorList>
            <person name="Lu A.-L."/>
            <person name="Fawcett W.P."/>
        </authorList>
    </citation>
    <scope>NUCLEOTIDE SEQUENCE [MRNA]</scope>
    <scope>FUNCTION</scope>
    <scope>SUBUNIT</scope>
</reference>
<reference key="2">
    <citation type="journal article" date="2002" name="Nature">
        <title>The genome sequence of Schizosaccharomyces pombe.</title>
        <authorList>
            <person name="Wood V."/>
            <person name="Gwilliam R."/>
            <person name="Rajandream M.A."/>
            <person name="Lyne M.H."/>
            <person name="Lyne R."/>
            <person name="Stewart A."/>
            <person name="Sgouros J.G."/>
            <person name="Peat N."/>
            <person name="Hayles J."/>
            <person name="Baker S.G."/>
            <person name="Basham D."/>
            <person name="Bowman S."/>
            <person name="Brooks K."/>
            <person name="Brown D."/>
            <person name="Brown S."/>
            <person name="Chillingworth T."/>
            <person name="Churcher C.M."/>
            <person name="Collins M."/>
            <person name="Connor R."/>
            <person name="Cronin A."/>
            <person name="Davis P."/>
            <person name="Feltwell T."/>
            <person name="Fraser A."/>
            <person name="Gentles S."/>
            <person name="Goble A."/>
            <person name="Hamlin N."/>
            <person name="Harris D.E."/>
            <person name="Hidalgo J."/>
            <person name="Hodgson G."/>
            <person name="Holroyd S."/>
            <person name="Hornsby T."/>
            <person name="Howarth S."/>
            <person name="Huckle E.J."/>
            <person name="Hunt S."/>
            <person name="Jagels K."/>
            <person name="James K.D."/>
            <person name="Jones L."/>
            <person name="Jones M."/>
            <person name="Leather S."/>
            <person name="McDonald S."/>
            <person name="McLean J."/>
            <person name="Mooney P."/>
            <person name="Moule S."/>
            <person name="Mungall K.L."/>
            <person name="Murphy L.D."/>
            <person name="Niblett D."/>
            <person name="Odell C."/>
            <person name="Oliver K."/>
            <person name="O'Neil S."/>
            <person name="Pearson D."/>
            <person name="Quail M.A."/>
            <person name="Rabbinowitsch E."/>
            <person name="Rutherford K.M."/>
            <person name="Rutter S."/>
            <person name="Saunders D."/>
            <person name="Seeger K."/>
            <person name="Sharp S."/>
            <person name="Skelton J."/>
            <person name="Simmonds M.N."/>
            <person name="Squares R."/>
            <person name="Squares S."/>
            <person name="Stevens K."/>
            <person name="Taylor K."/>
            <person name="Taylor R.G."/>
            <person name="Tivey A."/>
            <person name="Walsh S.V."/>
            <person name="Warren T."/>
            <person name="Whitehead S."/>
            <person name="Woodward J.R."/>
            <person name="Volckaert G."/>
            <person name="Aert R."/>
            <person name="Robben J."/>
            <person name="Grymonprez B."/>
            <person name="Weltjens I."/>
            <person name="Vanstreels E."/>
            <person name="Rieger M."/>
            <person name="Schaefer M."/>
            <person name="Mueller-Auer S."/>
            <person name="Gabel C."/>
            <person name="Fuchs M."/>
            <person name="Duesterhoeft A."/>
            <person name="Fritzc C."/>
            <person name="Holzer E."/>
            <person name="Moestl D."/>
            <person name="Hilbert H."/>
            <person name="Borzym K."/>
            <person name="Langer I."/>
            <person name="Beck A."/>
            <person name="Lehrach H."/>
            <person name="Reinhardt R."/>
            <person name="Pohl T.M."/>
            <person name="Eger P."/>
            <person name="Zimmermann W."/>
            <person name="Wedler H."/>
            <person name="Wambutt R."/>
            <person name="Purnelle B."/>
            <person name="Goffeau A."/>
            <person name="Cadieu E."/>
            <person name="Dreano S."/>
            <person name="Gloux S."/>
            <person name="Lelaure V."/>
            <person name="Mottier S."/>
            <person name="Galibert F."/>
            <person name="Aves S.J."/>
            <person name="Xiang Z."/>
            <person name="Hunt C."/>
            <person name="Moore K."/>
            <person name="Hurst S.M."/>
            <person name="Lucas M."/>
            <person name="Rochet M."/>
            <person name="Gaillardin C."/>
            <person name="Tallada V.A."/>
            <person name="Garzon A."/>
            <person name="Thode G."/>
            <person name="Daga R.R."/>
            <person name="Cruzado L."/>
            <person name="Jimenez J."/>
            <person name="Sanchez M."/>
            <person name="del Rey F."/>
            <person name="Benito J."/>
            <person name="Dominguez A."/>
            <person name="Revuelta J.L."/>
            <person name="Moreno S."/>
            <person name="Armstrong J."/>
            <person name="Forsburg S.L."/>
            <person name="Cerutti L."/>
            <person name="Lowe T."/>
            <person name="McCombie W.R."/>
            <person name="Paulsen I."/>
            <person name="Potashkin J."/>
            <person name="Shpakovski G.V."/>
            <person name="Ussery D."/>
            <person name="Barrell B.G."/>
            <person name="Nurse P."/>
        </authorList>
    </citation>
    <scope>NUCLEOTIDE SEQUENCE [LARGE SCALE GENOMIC DNA]</scope>
    <source>
        <strain>972 / ATCC 24843</strain>
    </source>
</reference>